<sequence length="494" mass="53886">MNAPVKPSQLIKGATGDWEVVIGLEIHAQVSSNAKLFSGAATAFGGDPNSHVSLVDAAMPGMLPVINEECVKQAIRSGLGLNAQINLRSVFDRKNYFYPDLPQGYQISQYKSPIVGEGIVVVDLPNGDSITVGIERLHLEQDAGKLLHDQHPTMTFVDLNRSGVALMEIVSKPDLRSSEQAKAYVSKLRTILRYLGTCDGDMEKGSLRADVNVSVRKPGEPYGTRCEIKNVNSIRFIGQAIEYEARRQIGILEDGGSIDQETRLYDPDKAETRSMRSKEEAHDYRYFPDPDLLPLEFSQAYVDELKTGLPELPDQKKSRFIGTFGLSSDDAGVLVSERESADFYEAVLAKLSDAARDGKLAANWVINELFGRLNKDGQNIDTSPVSAAQLAAIVDLIGEGTISGKIAKELFEIVWREGGDPRELVEARGMKQVTDLTAIEKVVDDIVASNPDKVAQAIAKPAMLGWFVGQVMKSSGGKANPQAVNDLLKRKLGL</sequence>
<organism>
    <name type="scientific">Rhodopseudomonas palustris (strain BisB5)</name>
    <dbReference type="NCBI Taxonomy" id="316057"/>
    <lineage>
        <taxon>Bacteria</taxon>
        <taxon>Pseudomonadati</taxon>
        <taxon>Pseudomonadota</taxon>
        <taxon>Alphaproteobacteria</taxon>
        <taxon>Hyphomicrobiales</taxon>
        <taxon>Nitrobacteraceae</taxon>
        <taxon>Rhodopseudomonas</taxon>
    </lineage>
</organism>
<feature type="chain" id="PRO_1000016030" description="Aspartyl/glutamyl-tRNA(Asn/Gln) amidotransferase subunit B">
    <location>
        <begin position="1"/>
        <end position="494"/>
    </location>
</feature>
<evidence type="ECO:0000255" key="1">
    <source>
        <dbReference type="HAMAP-Rule" id="MF_00121"/>
    </source>
</evidence>
<dbReference type="EC" id="6.3.5.-" evidence="1"/>
<dbReference type="EMBL" id="CP000283">
    <property type="protein sequence ID" value="ABE40240.1"/>
    <property type="molecule type" value="Genomic_DNA"/>
</dbReference>
<dbReference type="SMR" id="Q135J9"/>
<dbReference type="STRING" id="316057.RPD_3014"/>
<dbReference type="KEGG" id="rpd:RPD_3014"/>
<dbReference type="eggNOG" id="COG0064">
    <property type="taxonomic scope" value="Bacteria"/>
</dbReference>
<dbReference type="HOGENOM" id="CLU_019240_0_0_5"/>
<dbReference type="BioCyc" id="RPAL316057:RPD_RS15135-MONOMER"/>
<dbReference type="Proteomes" id="UP000001818">
    <property type="component" value="Chromosome"/>
</dbReference>
<dbReference type="GO" id="GO:0050566">
    <property type="term" value="F:asparaginyl-tRNA synthase (glutamine-hydrolyzing) activity"/>
    <property type="evidence" value="ECO:0007669"/>
    <property type="project" value="RHEA"/>
</dbReference>
<dbReference type="GO" id="GO:0005524">
    <property type="term" value="F:ATP binding"/>
    <property type="evidence" value="ECO:0007669"/>
    <property type="project" value="UniProtKB-KW"/>
</dbReference>
<dbReference type="GO" id="GO:0050567">
    <property type="term" value="F:glutaminyl-tRNA synthase (glutamine-hydrolyzing) activity"/>
    <property type="evidence" value="ECO:0007669"/>
    <property type="project" value="UniProtKB-UniRule"/>
</dbReference>
<dbReference type="GO" id="GO:0070681">
    <property type="term" value="P:glutaminyl-tRNAGln biosynthesis via transamidation"/>
    <property type="evidence" value="ECO:0007669"/>
    <property type="project" value="TreeGrafter"/>
</dbReference>
<dbReference type="GO" id="GO:0006412">
    <property type="term" value="P:translation"/>
    <property type="evidence" value="ECO:0007669"/>
    <property type="project" value="UniProtKB-UniRule"/>
</dbReference>
<dbReference type="FunFam" id="1.10.10.410:FF:000001">
    <property type="entry name" value="Aspartyl/glutamyl-tRNA(Asn/Gln) amidotransferase subunit B"/>
    <property type="match status" value="1"/>
</dbReference>
<dbReference type="FunFam" id="1.10.150.380:FF:000001">
    <property type="entry name" value="Aspartyl/glutamyl-tRNA(Asn/Gln) amidotransferase subunit B"/>
    <property type="match status" value="1"/>
</dbReference>
<dbReference type="Gene3D" id="1.10.10.410">
    <property type="match status" value="1"/>
</dbReference>
<dbReference type="Gene3D" id="1.10.150.380">
    <property type="entry name" value="GatB domain, N-terminal subdomain"/>
    <property type="match status" value="1"/>
</dbReference>
<dbReference type="HAMAP" id="MF_00121">
    <property type="entry name" value="GatB"/>
    <property type="match status" value="1"/>
</dbReference>
<dbReference type="InterPro" id="IPR017959">
    <property type="entry name" value="Asn/Gln-tRNA_amidoTrfase_suB/E"/>
</dbReference>
<dbReference type="InterPro" id="IPR006075">
    <property type="entry name" value="Asn/Gln-tRNA_Trfase_suB/E_cat"/>
</dbReference>
<dbReference type="InterPro" id="IPR018027">
    <property type="entry name" value="Asn/Gln_amidotransferase"/>
</dbReference>
<dbReference type="InterPro" id="IPR003789">
    <property type="entry name" value="Asn/Gln_tRNA_amidoTrase-B-like"/>
</dbReference>
<dbReference type="InterPro" id="IPR004413">
    <property type="entry name" value="GatB"/>
</dbReference>
<dbReference type="InterPro" id="IPR042114">
    <property type="entry name" value="GatB_C_1"/>
</dbReference>
<dbReference type="InterPro" id="IPR023168">
    <property type="entry name" value="GatB_Yqey_C_2"/>
</dbReference>
<dbReference type="InterPro" id="IPR017958">
    <property type="entry name" value="Gln-tRNA_amidoTrfase_suB_CS"/>
</dbReference>
<dbReference type="InterPro" id="IPR014746">
    <property type="entry name" value="Gln_synth/guanido_kin_cat_dom"/>
</dbReference>
<dbReference type="NCBIfam" id="TIGR00133">
    <property type="entry name" value="gatB"/>
    <property type="match status" value="1"/>
</dbReference>
<dbReference type="NCBIfam" id="NF004012">
    <property type="entry name" value="PRK05477.1-2"/>
    <property type="match status" value="1"/>
</dbReference>
<dbReference type="NCBIfam" id="NF004014">
    <property type="entry name" value="PRK05477.1-4"/>
    <property type="match status" value="1"/>
</dbReference>
<dbReference type="NCBIfam" id="NF004015">
    <property type="entry name" value="PRK05477.1-5"/>
    <property type="match status" value="1"/>
</dbReference>
<dbReference type="PANTHER" id="PTHR11659">
    <property type="entry name" value="GLUTAMYL-TRNA GLN AMIDOTRANSFERASE SUBUNIT B MITOCHONDRIAL AND PROKARYOTIC PET112-RELATED"/>
    <property type="match status" value="1"/>
</dbReference>
<dbReference type="PANTHER" id="PTHR11659:SF0">
    <property type="entry name" value="GLUTAMYL-TRNA(GLN) AMIDOTRANSFERASE SUBUNIT B, MITOCHONDRIAL"/>
    <property type="match status" value="1"/>
</dbReference>
<dbReference type="Pfam" id="PF02934">
    <property type="entry name" value="GatB_N"/>
    <property type="match status" value="1"/>
</dbReference>
<dbReference type="Pfam" id="PF02637">
    <property type="entry name" value="GatB_Yqey"/>
    <property type="match status" value="1"/>
</dbReference>
<dbReference type="SMART" id="SM00845">
    <property type="entry name" value="GatB_Yqey"/>
    <property type="match status" value="1"/>
</dbReference>
<dbReference type="SUPFAM" id="SSF89095">
    <property type="entry name" value="GatB/YqeY motif"/>
    <property type="match status" value="1"/>
</dbReference>
<dbReference type="SUPFAM" id="SSF55931">
    <property type="entry name" value="Glutamine synthetase/guanido kinase"/>
    <property type="match status" value="1"/>
</dbReference>
<dbReference type="PROSITE" id="PS01234">
    <property type="entry name" value="GATB"/>
    <property type="match status" value="1"/>
</dbReference>
<name>GATB_RHOPS</name>
<keyword id="KW-0067">ATP-binding</keyword>
<keyword id="KW-0436">Ligase</keyword>
<keyword id="KW-0547">Nucleotide-binding</keyword>
<keyword id="KW-0648">Protein biosynthesis</keyword>
<protein>
    <recommendedName>
        <fullName evidence="1">Aspartyl/glutamyl-tRNA(Asn/Gln) amidotransferase subunit B</fullName>
        <shortName evidence="1">Asp/Glu-ADT subunit B</shortName>
        <ecNumber evidence="1">6.3.5.-</ecNumber>
    </recommendedName>
</protein>
<gene>
    <name evidence="1" type="primary">gatB</name>
    <name type="ordered locus">RPD_3014</name>
</gene>
<proteinExistence type="inferred from homology"/>
<comment type="function">
    <text evidence="1">Allows the formation of correctly charged Asn-tRNA(Asn) or Gln-tRNA(Gln) through the transamidation of misacylated Asp-tRNA(Asn) or Glu-tRNA(Gln) in organisms which lack either or both of asparaginyl-tRNA or glutaminyl-tRNA synthetases. The reaction takes place in the presence of glutamine and ATP through an activated phospho-Asp-tRNA(Asn) or phospho-Glu-tRNA(Gln).</text>
</comment>
<comment type="catalytic activity">
    <reaction evidence="1">
        <text>L-glutamyl-tRNA(Gln) + L-glutamine + ATP + H2O = L-glutaminyl-tRNA(Gln) + L-glutamate + ADP + phosphate + H(+)</text>
        <dbReference type="Rhea" id="RHEA:17521"/>
        <dbReference type="Rhea" id="RHEA-COMP:9681"/>
        <dbReference type="Rhea" id="RHEA-COMP:9684"/>
        <dbReference type="ChEBI" id="CHEBI:15377"/>
        <dbReference type="ChEBI" id="CHEBI:15378"/>
        <dbReference type="ChEBI" id="CHEBI:29985"/>
        <dbReference type="ChEBI" id="CHEBI:30616"/>
        <dbReference type="ChEBI" id="CHEBI:43474"/>
        <dbReference type="ChEBI" id="CHEBI:58359"/>
        <dbReference type="ChEBI" id="CHEBI:78520"/>
        <dbReference type="ChEBI" id="CHEBI:78521"/>
        <dbReference type="ChEBI" id="CHEBI:456216"/>
    </reaction>
</comment>
<comment type="catalytic activity">
    <reaction evidence="1">
        <text>L-aspartyl-tRNA(Asn) + L-glutamine + ATP + H2O = L-asparaginyl-tRNA(Asn) + L-glutamate + ADP + phosphate + 2 H(+)</text>
        <dbReference type="Rhea" id="RHEA:14513"/>
        <dbReference type="Rhea" id="RHEA-COMP:9674"/>
        <dbReference type="Rhea" id="RHEA-COMP:9677"/>
        <dbReference type="ChEBI" id="CHEBI:15377"/>
        <dbReference type="ChEBI" id="CHEBI:15378"/>
        <dbReference type="ChEBI" id="CHEBI:29985"/>
        <dbReference type="ChEBI" id="CHEBI:30616"/>
        <dbReference type="ChEBI" id="CHEBI:43474"/>
        <dbReference type="ChEBI" id="CHEBI:58359"/>
        <dbReference type="ChEBI" id="CHEBI:78515"/>
        <dbReference type="ChEBI" id="CHEBI:78516"/>
        <dbReference type="ChEBI" id="CHEBI:456216"/>
    </reaction>
</comment>
<comment type="subunit">
    <text evidence="1">Heterotrimer of A, B and C subunits.</text>
</comment>
<comment type="similarity">
    <text evidence="1">Belongs to the GatB/GatE family. GatB subfamily.</text>
</comment>
<accession>Q135J9</accession>
<reference key="1">
    <citation type="submission" date="2006-03" db="EMBL/GenBank/DDBJ databases">
        <title>Complete sequence of Rhodopseudomonas palustris BisB5.</title>
        <authorList>
            <consortium name="US DOE Joint Genome Institute"/>
            <person name="Copeland A."/>
            <person name="Lucas S."/>
            <person name="Lapidus A."/>
            <person name="Barry K."/>
            <person name="Detter J.C."/>
            <person name="Glavina del Rio T."/>
            <person name="Hammon N."/>
            <person name="Israni S."/>
            <person name="Dalin E."/>
            <person name="Tice H."/>
            <person name="Pitluck S."/>
            <person name="Chain P."/>
            <person name="Malfatti S."/>
            <person name="Shin M."/>
            <person name="Vergez L."/>
            <person name="Schmutz J."/>
            <person name="Larimer F."/>
            <person name="Land M."/>
            <person name="Hauser L."/>
            <person name="Pelletier D.A."/>
            <person name="Kyrpides N."/>
            <person name="Lykidis A."/>
            <person name="Oda Y."/>
            <person name="Harwood C.S."/>
            <person name="Richardson P."/>
        </authorList>
    </citation>
    <scope>NUCLEOTIDE SEQUENCE [LARGE SCALE GENOMIC DNA]</scope>
    <source>
        <strain>BisB5</strain>
    </source>
</reference>